<evidence type="ECO:0000255" key="1">
    <source>
        <dbReference type="HAMAP-Rule" id="MF_01365"/>
    </source>
</evidence>
<evidence type="ECO:0000305" key="2"/>
<protein>
    <recommendedName>
        <fullName evidence="1">Large ribosomal subunit protein uL6</fullName>
    </recommendedName>
    <alternativeName>
        <fullName evidence="2">50S ribosomal protein L6</fullName>
    </alternativeName>
</protein>
<keyword id="KW-1185">Reference proteome</keyword>
<keyword id="KW-0687">Ribonucleoprotein</keyword>
<keyword id="KW-0689">Ribosomal protein</keyword>
<keyword id="KW-0694">RNA-binding</keyword>
<keyword id="KW-0699">rRNA-binding</keyword>
<accession>B2VK81</accession>
<feature type="chain" id="PRO_1000143989" description="Large ribosomal subunit protein uL6">
    <location>
        <begin position="1"/>
        <end position="177"/>
    </location>
</feature>
<proteinExistence type="inferred from homology"/>
<reference key="1">
    <citation type="journal article" date="2008" name="Environ. Microbiol.">
        <title>The genome of Erwinia tasmaniensis strain Et1/99, a non-pathogenic bacterium in the genus Erwinia.</title>
        <authorList>
            <person name="Kube M."/>
            <person name="Migdoll A.M."/>
            <person name="Mueller I."/>
            <person name="Kuhl H."/>
            <person name="Beck A."/>
            <person name="Reinhardt R."/>
            <person name="Geider K."/>
        </authorList>
    </citation>
    <scope>NUCLEOTIDE SEQUENCE [LARGE SCALE GENOMIC DNA]</scope>
    <source>
        <strain>DSM 17950 / CFBP 7177 / CIP 109463 / NCPPB 4357 / Et1/99</strain>
    </source>
</reference>
<comment type="function">
    <text evidence="1">This protein binds to the 23S rRNA, and is important in its secondary structure. It is located near the subunit interface in the base of the L7/L12 stalk, and near the tRNA binding site of the peptidyltransferase center.</text>
</comment>
<comment type="subunit">
    <text evidence="1">Part of the 50S ribosomal subunit.</text>
</comment>
<comment type="similarity">
    <text evidence="1">Belongs to the universal ribosomal protein uL6 family.</text>
</comment>
<dbReference type="EMBL" id="CU468135">
    <property type="protein sequence ID" value="CAO98194.1"/>
    <property type="molecule type" value="Genomic_DNA"/>
</dbReference>
<dbReference type="RefSeq" id="WP_012442837.1">
    <property type="nucleotide sequence ID" value="NC_010694.1"/>
</dbReference>
<dbReference type="SMR" id="B2VK81"/>
<dbReference type="STRING" id="465817.ETA_31480"/>
<dbReference type="KEGG" id="eta:ETA_31480"/>
<dbReference type="eggNOG" id="COG0097">
    <property type="taxonomic scope" value="Bacteria"/>
</dbReference>
<dbReference type="HOGENOM" id="CLU_065464_1_2_6"/>
<dbReference type="OrthoDB" id="9805007at2"/>
<dbReference type="Proteomes" id="UP000001726">
    <property type="component" value="Chromosome"/>
</dbReference>
<dbReference type="GO" id="GO:0022625">
    <property type="term" value="C:cytosolic large ribosomal subunit"/>
    <property type="evidence" value="ECO:0007669"/>
    <property type="project" value="TreeGrafter"/>
</dbReference>
<dbReference type="GO" id="GO:0019843">
    <property type="term" value="F:rRNA binding"/>
    <property type="evidence" value="ECO:0007669"/>
    <property type="project" value="UniProtKB-UniRule"/>
</dbReference>
<dbReference type="GO" id="GO:0003735">
    <property type="term" value="F:structural constituent of ribosome"/>
    <property type="evidence" value="ECO:0007669"/>
    <property type="project" value="InterPro"/>
</dbReference>
<dbReference type="GO" id="GO:0002181">
    <property type="term" value="P:cytoplasmic translation"/>
    <property type="evidence" value="ECO:0007669"/>
    <property type="project" value="TreeGrafter"/>
</dbReference>
<dbReference type="FunFam" id="3.90.930.12:FF:000001">
    <property type="entry name" value="50S ribosomal protein L6"/>
    <property type="match status" value="1"/>
</dbReference>
<dbReference type="FunFam" id="3.90.930.12:FF:000002">
    <property type="entry name" value="50S ribosomal protein L6"/>
    <property type="match status" value="1"/>
</dbReference>
<dbReference type="Gene3D" id="3.90.930.12">
    <property type="entry name" value="Ribosomal protein L6, alpha-beta domain"/>
    <property type="match status" value="2"/>
</dbReference>
<dbReference type="HAMAP" id="MF_01365_B">
    <property type="entry name" value="Ribosomal_uL6_B"/>
    <property type="match status" value="1"/>
</dbReference>
<dbReference type="InterPro" id="IPR000702">
    <property type="entry name" value="Ribosomal_uL6-like"/>
</dbReference>
<dbReference type="InterPro" id="IPR036789">
    <property type="entry name" value="Ribosomal_uL6-like_a/b-dom_sf"/>
</dbReference>
<dbReference type="InterPro" id="IPR020040">
    <property type="entry name" value="Ribosomal_uL6_a/b-dom"/>
</dbReference>
<dbReference type="InterPro" id="IPR019906">
    <property type="entry name" value="Ribosomal_uL6_bac-type"/>
</dbReference>
<dbReference type="InterPro" id="IPR002358">
    <property type="entry name" value="Ribosomal_uL6_CS"/>
</dbReference>
<dbReference type="NCBIfam" id="TIGR03654">
    <property type="entry name" value="L6_bact"/>
    <property type="match status" value="1"/>
</dbReference>
<dbReference type="PANTHER" id="PTHR11655">
    <property type="entry name" value="60S/50S RIBOSOMAL PROTEIN L6/L9"/>
    <property type="match status" value="1"/>
</dbReference>
<dbReference type="PANTHER" id="PTHR11655:SF14">
    <property type="entry name" value="LARGE RIBOSOMAL SUBUNIT PROTEIN UL6M"/>
    <property type="match status" value="1"/>
</dbReference>
<dbReference type="Pfam" id="PF00347">
    <property type="entry name" value="Ribosomal_L6"/>
    <property type="match status" value="2"/>
</dbReference>
<dbReference type="PIRSF" id="PIRSF002162">
    <property type="entry name" value="Ribosomal_L6"/>
    <property type="match status" value="1"/>
</dbReference>
<dbReference type="PRINTS" id="PR00059">
    <property type="entry name" value="RIBOSOMALL6"/>
</dbReference>
<dbReference type="SUPFAM" id="SSF56053">
    <property type="entry name" value="Ribosomal protein L6"/>
    <property type="match status" value="2"/>
</dbReference>
<dbReference type="PROSITE" id="PS00525">
    <property type="entry name" value="RIBOSOMAL_L6_1"/>
    <property type="match status" value="1"/>
</dbReference>
<organism>
    <name type="scientific">Erwinia tasmaniensis (strain DSM 17950 / CFBP 7177 / CIP 109463 / NCPPB 4357 / Et1/99)</name>
    <dbReference type="NCBI Taxonomy" id="465817"/>
    <lineage>
        <taxon>Bacteria</taxon>
        <taxon>Pseudomonadati</taxon>
        <taxon>Pseudomonadota</taxon>
        <taxon>Gammaproteobacteria</taxon>
        <taxon>Enterobacterales</taxon>
        <taxon>Erwiniaceae</taxon>
        <taxon>Erwinia</taxon>
    </lineage>
</organism>
<sequence length="177" mass="18816">MSRVAKAPVVIPAGVEVKLDGQVISIKGKNGELTRTLNNAVEVKHADNTLTFAPREGFADGWAQAGTSRALLNAMVIGVTEGFTKKLQLVGVGYRAAVKGNAVSLALGFSHPVEHALPAGITAECPTQTEIVLKGADKQLIGQVAADLRAYRRPEPYKGKGVRYADEVVRTKEAKKK</sequence>
<gene>
    <name evidence="1" type="primary">rplF</name>
    <name type="ordered locus">ETA_31480</name>
</gene>
<name>RL6_ERWT9</name>